<dbReference type="EMBL" id="LT708304">
    <property type="protein sequence ID" value="SIU00618.1"/>
    <property type="molecule type" value="Genomic_DNA"/>
</dbReference>
<dbReference type="RefSeq" id="NP_855662.1">
    <property type="nucleotide sequence ID" value="NC_002945.3"/>
</dbReference>
<dbReference type="RefSeq" id="WP_003410003.1">
    <property type="nucleotide sequence ID" value="NC_002945.4"/>
</dbReference>
<dbReference type="SMR" id="P64910"/>
<dbReference type="KEGG" id="mbo:BQ2027_MB2012C"/>
<dbReference type="PATRIC" id="fig|233413.5.peg.2210"/>
<dbReference type="Proteomes" id="UP000001419">
    <property type="component" value="Chromosome"/>
</dbReference>
<dbReference type="InterPro" id="IPR024467">
    <property type="entry name" value="Xre/MbcA/ParS-like_toxin-bd"/>
</dbReference>
<dbReference type="Pfam" id="PF09722">
    <property type="entry name" value="Xre_MbcA_ParS_C"/>
    <property type="match status" value="1"/>
</dbReference>
<reference key="1">
    <citation type="journal article" date="2003" name="Proc. Natl. Acad. Sci. U.S.A.">
        <title>The complete genome sequence of Mycobacterium bovis.</title>
        <authorList>
            <person name="Garnier T."/>
            <person name="Eiglmeier K."/>
            <person name="Camus J.-C."/>
            <person name="Medina N."/>
            <person name="Mansoor H."/>
            <person name="Pryor M."/>
            <person name="Duthoy S."/>
            <person name="Grondin S."/>
            <person name="Lacroix C."/>
            <person name="Monsempe C."/>
            <person name="Simon S."/>
            <person name="Harris B."/>
            <person name="Atkin R."/>
            <person name="Doggett J."/>
            <person name="Mayes R."/>
            <person name="Keating L."/>
            <person name="Wheeler P.R."/>
            <person name="Parkhill J."/>
            <person name="Barrell B.G."/>
            <person name="Cole S.T."/>
            <person name="Gordon S.V."/>
            <person name="Hewinson R.G."/>
        </authorList>
    </citation>
    <scope>NUCLEOTIDE SEQUENCE [LARGE SCALE GENOMIC DNA]</scope>
    <source>
        <strain>ATCC BAA-935 / AF2122/97</strain>
    </source>
</reference>
<reference key="2">
    <citation type="journal article" date="2017" name="Genome Announc.">
        <title>Updated reference genome sequence and annotation of Mycobacterium bovis AF2122/97.</title>
        <authorList>
            <person name="Malone K.M."/>
            <person name="Farrell D."/>
            <person name="Stuber T.P."/>
            <person name="Schubert O.T."/>
            <person name="Aebersold R."/>
            <person name="Robbe-Austerman S."/>
            <person name="Gordon S.V."/>
        </authorList>
    </citation>
    <scope>NUCLEOTIDE SEQUENCE [LARGE SCALE GENOMIC DNA]</scope>
    <scope>GENOME REANNOTATION</scope>
    <source>
        <strain>ATCC BAA-935 / AF2122/97</strain>
    </source>
</reference>
<organism>
    <name type="scientific">Mycobacterium bovis (strain ATCC BAA-935 / AF2122/97)</name>
    <dbReference type="NCBI Taxonomy" id="233413"/>
    <lineage>
        <taxon>Bacteria</taxon>
        <taxon>Bacillati</taxon>
        <taxon>Actinomycetota</taxon>
        <taxon>Actinomycetes</taxon>
        <taxon>Mycobacteriales</taxon>
        <taxon>Mycobacteriaceae</taxon>
        <taxon>Mycobacterium</taxon>
        <taxon>Mycobacterium tuberculosis complex</taxon>
    </lineage>
</organism>
<gene>
    <name type="primary">mbcA</name>
    <name type="ordered locus">BQ2027_MB2012C</name>
</gene>
<evidence type="ECO:0000250" key="1">
    <source>
        <dbReference type="UniProtKB" id="P9WLP7"/>
    </source>
</evidence>
<evidence type="ECO:0000250" key="2">
    <source>
        <dbReference type="UniProtKB" id="P9WLP9"/>
    </source>
</evidence>
<evidence type="ECO:0000305" key="3"/>
<accession>P64910</accession>
<accession>A0A1R3XZV5</accession>
<accession>Q10868</accession>
<accession>X2BJS5</accession>
<protein>
    <recommendedName>
        <fullName evidence="1">Mycobacterial cidal antitoxin MbcA</fullName>
    </recommendedName>
</protein>
<sequence>MGVNVLASTVSGAIERLGLTYEEVGDIVDASPRSVARWTAGQVVPQRLNKQRLIELAYVADALAEVLPRDQANVWMFSPNRLLEHRKPADLVRDGEYQRVLALIDAMAEGVFV</sequence>
<feature type="chain" id="PRO_0000014117" description="Mycobacterial cidal antitoxin MbcA">
    <location>
        <begin position="1"/>
        <end position="113"/>
    </location>
</feature>
<comment type="function">
    <text evidence="1">Antitoxin component of a type II toxin-antitoxin (TA) system. Neutralizes the activity of cognate toxin MbcT by blocking access to the toxin active site.</text>
</comment>
<comment type="subunit">
    <text evidence="2">Forms a heterotetramer with cognate toxin MbcT.</text>
</comment>
<comment type="similarity">
    <text evidence="3">Belongs to the MbcA/ParS/Xre antitoxin family.</text>
</comment>
<keyword id="KW-1185">Reference proteome</keyword>
<keyword id="KW-1277">Toxin-antitoxin system</keyword>
<proteinExistence type="inferred from homology"/>
<name>MBCA_MYCBO</name>